<sequence length="91" mass="11096">MVKNSFISVISQEEEKEENRGSIEFQVFRFTNKIRRLTSHLELHRKDYLSQRGLRKILGKRQRLLSYLSKKNRIRYKELISQLDIRESKTR</sequence>
<name>RR15_EUCGG</name>
<evidence type="ECO:0000250" key="1"/>
<evidence type="ECO:0000305" key="2"/>
<proteinExistence type="inferred from homology"/>
<protein>
    <recommendedName>
        <fullName evidence="2">Small ribosomal subunit protein uS15c</fullName>
    </recommendedName>
    <alternativeName>
        <fullName>30S ribosomal protein S15, chloroplastic</fullName>
    </alternativeName>
</protein>
<feature type="chain" id="PRO_0000115632" description="Small ribosomal subunit protein uS15c">
    <location>
        <begin position="1"/>
        <end position="91"/>
    </location>
</feature>
<accession>Q49KU1</accession>
<dbReference type="EMBL" id="AY780259">
    <property type="protein sequence ID" value="AAX21085.1"/>
    <property type="molecule type" value="Genomic_DNA"/>
</dbReference>
<dbReference type="RefSeq" id="YP_636356.1">
    <property type="nucleotide sequence ID" value="NC_008115.1"/>
</dbReference>
<dbReference type="SMR" id="Q49KU1"/>
<dbReference type="GeneID" id="4108437"/>
<dbReference type="GO" id="GO:0009507">
    <property type="term" value="C:chloroplast"/>
    <property type="evidence" value="ECO:0007669"/>
    <property type="project" value="UniProtKB-SubCell"/>
</dbReference>
<dbReference type="GO" id="GO:1990904">
    <property type="term" value="C:ribonucleoprotein complex"/>
    <property type="evidence" value="ECO:0007669"/>
    <property type="project" value="UniProtKB-KW"/>
</dbReference>
<dbReference type="GO" id="GO:0005840">
    <property type="term" value="C:ribosome"/>
    <property type="evidence" value="ECO:0007669"/>
    <property type="project" value="UniProtKB-KW"/>
</dbReference>
<dbReference type="GO" id="GO:0003735">
    <property type="term" value="F:structural constituent of ribosome"/>
    <property type="evidence" value="ECO:0007669"/>
    <property type="project" value="InterPro"/>
</dbReference>
<dbReference type="GO" id="GO:0006412">
    <property type="term" value="P:translation"/>
    <property type="evidence" value="ECO:0007669"/>
    <property type="project" value="UniProtKB-UniRule"/>
</dbReference>
<dbReference type="CDD" id="cd00353">
    <property type="entry name" value="Ribosomal_S15p_S13e"/>
    <property type="match status" value="1"/>
</dbReference>
<dbReference type="Gene3D" id="1.10.287.10">
    <property type="entry name" value="S15/NS1, RNA-binding"/>
    <property type="match status" value="1"/>
</dbReference>
<dbReference type="HAMAP" id="MF_01343_B">
    <property type="entry name" value="Ribosomal_uS15_B"/>
    <property type="match status" value="1"/>
</dbReference>
<dbReference type="InterPro" id="IPR000589">
    <property type="entry name" value="Ribosomal_uS15"/>
</dbReference>
<dbReference type="InterPro" id="IPR005290">
    <property type="entry name" value="Ribosomal_uS15_bac-type"/>
</dbReference>
<dbReference type="InterPro" id="IPR009068">
    <property type="entry name" value="uS15_NS1_RNA-bd_sf"/>
</dbReference>
<dbReference type="NCBIfam" id="TIGR00952">
    <property type="entry name" value="S15_bact"/>
    <property type="match status" value="1"/>
</dbReference>
<dbReference type="PANTHER" id="PTHR23321">
    <property type="entry name" value="RIBOSOMAL PROTEIN S15, BACTERIAL AND ORGANELLAR"/>
    <property type="match status" value="1"/>
</dbReference>
<dbReference type="PANTHER" id="PTHR23321:SF26">
    <property type="entry name" value="SMALL RIBOSOMAL SUBUNIT PROTEIN US15M"/>
    <property type="match status" value="1"/>
</dbReference>
<dbReference type="Pfam" id="PF00312">
    <property type="entry name" value="Ribosomal_S15"/>
    <property type="match status" value="1"/>
</dbReference>
<dbReference type="SMART" id="SM01387">
    <property type="entry name" value="Ribosomal_S15"/>
    <property type="match status" value="1"/>
</dbReference>
<dbReference type="SUPFAM" id="SSF47060">
    <property type="entry name" value="S15/NS1 RNA-binding domain"/>
    <property type="match status" value="1"/>
</dbReference>
<dbReference type="PROSITE" id="PS00362">
    <property type="entry name" value="RIBOSOMAL_S15"/>
    <property type="match status" value="1"/>
</dbReference>
<organism>
    <name type="scientific">Eucalyptus globulus subsp. globulus</name>
    <name type="common">Tasmanian blue gum</name>
    <dbReference type="NCBI Taxonomy" id="71271"/>
    <lineage>
        <taxon>Eukaryota</taxon>
        <taxon>Viridiplantae</taxon>
        <taxon>Streptophyta</taxon>
        <taxon>Embryophyta</taxon>
        <taxon>Tracheophyta</taxon>
        <taxon>Spermatophyta</taxon>
        <taxon>Magnoliopsida</taxon>
        <taxon>eudicotyledons</taxon>
        <taxon>Gunneridae</taxon>
        <taxon>Pentapetalae</taxon>
        <taxon>rosids</taxon>
        <taxon>malvids</taxon>
        <taxon>Myrtales</taxon>
        <taxon>Myrtaceae</taxon>
        <taxon>Myrtoideae</taxon>
        <taxon>Eucalypteae</taxon>
        <taxon>Eucalyptus</taxon>
    </lineage>
</organism>
<comment type="subunit">
    <text evidence="1">Part of the 30S ribosomal subunit.</text>
</comment>
<comment type="subcellular location">
    <subcellularLocation>
        <location>Plastid</location>
        <location>Chloroplast</location>
    </subcellularLocation>
</comment>
<comment type="similarity">
    <text evidence="2">Belongs to the universal ribosomal protein uS15 family.</text>
</comment>
<gene>
    <name type="primary">rps15</name>
</gene>
<geneLocation type="chloroplast"/>
<reference key="1">
    <citation type="journal article" date="2005" name="DNA Res.">
        <title>Complete nucleotide sequence of the chloroplast genome from the Tasmanian blue gum, Eucalyptus globulus (Myrtaceae).</title>
        <authorList>
            <person name="Steane D.A."/>
        </authorList>
    </citation>
    <scope>NUCLEOTIDE SEQUENCE [LARGE SCALE GENOMIC DNA]</scope>
</reference>
<keyword id="KW-0150">Chloroplast</keyword>
<keyword id="KW-0934">Plastid</keyword>
<keyword id="KW-0687">Ribonucleoprotein</keyword>
<keyword id="KW-0689">Ribosomal protein</keyword>